<name>PIT_MYCBO</name>
<accession>P59950</accession>
<accession>A0A1R3XW73</accession>
<accession>X2BFE2</accession>
<sequence>MNLQLFLLLIVVVTALAFDFTNGFHDTGNAMATSIASGALAPRVAVALSAVLNLIGAFLSTAVAATIAKGLIDANLVTLELVFAGLVGGIVWNLLTWLLGIPSSSSHALIGGIVGATIAAVGLRGVIWSGVVSKVIVPAVVAALLATLVGAVGTWLVYRTTRGVAEKRTERGFRRGQIGSASLVSLAHGTNDAQKTMGVIFLALMSYGAVSTTASVPPLWVIVSCAVAMAAGTYLGGWRIIRTLGKGLVEIKPPQGMAAESSSAAVILLSAHFGYALSTTQVATGSVLGSGVGKPGAEVRWGVAGRMVVAWLVTLPLAGLVGAFTYGLVHFIGGYPGAILGFALLWLTATAIWLRSRRAPIDHTNVNADWEGNLTAGLEAGAQPLADQRPPVPAPPAPTPPPNHRAPQFGVTTRNAP</sequence>
<gene>
    <name type="primary">pit</name>
    <name type="synonym">pitA</name>
    <name type="ordered locus">BQ2027_MB0559C</name>
</gene>
<comment type="function">
    <text evidence="1">Low-affinity inorganic phosphate transporter.</text>
</comment>
<comment type="catalytic activity">
    <reaction evidence="1">
        <text>phosphate(in) + H(+)(in) = phosphate(out) + H(+)(out)</text>
        <dbReference type="Rhea" id="RHEA:29939"/>
        <dbReference type="ChEBI" id="CHEBI:15378"/>
        <dbReference type="ChEBI" id="CHEBI:43474"/>
    </reaction>
</comment>
<comment type="subcellular location">
    <subcellularLocation>
        <location evidence="4">Cell membrane</location>
        <topology evidence="2">Multi-pass membrane protein</topology>
    </subcellularLocation>
</comment>
<comment type="similarity">
    <text evidence="4">Belongs to the inorganic phosphate transporter (PiT) (TC 2.A.20) family. Pit subfamily.</text>
</comment>
<evidence type="ECO:0000250" key="1">
    <source>
        <dbReference type="UniProtKB" id="P0AFJ7"/>
    </source>
</evidence>
<evidence type="ECO:0000255" key="2"/>
<evidence type="ECO:0000256" key="3">
    <source>
        <dbReference type="SAM" id="MobiDB-lite"/>
    </source>
</evidence>
<evidence type="ECO:0000305" key="4"/>
<protein>
    <recommendedName>
        <fullName>Probable low-affinity inorganic phosphate transporter</fullName>
    </recommendedName>
</protein>
<feature type="chain" id="PRO_0000080790" description="Probable low-affinity inorganic phosphate transporter">
    <location>
        <begin position="1"/>
        <end position="417"/>
    </location>
</feature>
<feature type="transmembrane region" description="Helical" evidence="2">
    <location>
        <begin position="5"/>
        <end position="25"/>
    </location>
</feature>
<feature type="transmembrane region" description="Helical" evidence="2">
    <location>
        <begin position="44"/>
        <end position="64"/>
    </location>
</feature>
<feature type="transmembrane region" description="Helical" evidence="2">
    <location>
        <begin position="81"/>
        <end position="101"/>
    </location>
</feature>
<feature type="transmembrane region" description="Helical" evidence="2">
    <location>
        <begin position="108"/>
        <end position="128"/>
    </location>
</feature>
<feature type="transmembrane region" description="Helical" evidence="2">
    <location>
        <begin position="135"/>
        <end position="155"/>
    </location>
</feature>
<feature type="transmembrane region" description="Helical" evidence="2">
    <location>
        <begin position="218"/>
        <end position="238"/>
    </location>
</feature>
<feature type="transmembrane region" description="Helical" evidence="2">
    <location>
        <begin position="301"/>
        <end position="321"/>
    </location>
</feature>
<feature type="transmembrane region" description="Helical" evidence="2">
    <location>
        <begin position="327"/>
        <end position="347"/>
    </location>
</feature>
<feature type="region of interest" description="Disordered" evidence="3">
    <location>
        <begin position="379"/>
        <end position="417"/>
    </location>
</feature>
<feature type="compositionally biased region" description="Pro residues" evidence="3">
    <location>
        <begin position="390"/>
        <end position="404"/>
    </location>
</feature>
<keyword id="KW-1003">Cell membrane</keyword>
<keyword id="KW-0472">Membrane</keyword>
<keyword id="KW-0592">Phosphate transport</keyword>
<keyword id="KW-1185">Reference proteome</keyword>
<keyword id="KW-0769">Symport</keyword>
<keyword id="KW-0812">Transmembrane</keyword>
<keyword id="KW-1133">Transmembrane helix</keyword>
<keyword id="KW-0813">Transport</keyword>
<dbReference type="EMBL" id="LT708304">
    <property type="protein sequence ID" value="SIT99155.1"/>
    <property type="molecule type" value="Genomic_DNA"/>
</dbReference>
<dbReference type="RefSeq" id="NP_854220.1">
    <property type="nucleotide sequence ID" value="NC_002945.3"/>
</dbReference>
<dbReference type="RefSeq" id="WP_003402904.1">
    <property type="nucleotide sequence ID" value="NC_002945.4"/>
</dbReference>
<dbReference type="SMR" id="P59950"/>
<dbReference type="TCDB" id="2.A.20.1.3">
    <property type="family name" value="the inorganic phosphate transporter (pit) family"/>
</dbReference>
<dbReference type="PATRIC" id="fig|233413.5.peg.607"/>
<dbReference type="Proteomes" id="UP000001419">
    <property type="component" value="Chromosome"/>
</dbReference>
<dbReference type="GO" id="GO:0005886">
    <property type="term" value="C:plasma membrane"/>
    <property type="evidence" value="ECO:0007669"/>
    <property type="project" value="UniProtKB-SubCell"/>
</dbReference>
<dbReference type="GO" id="GO:0005315">
    <property type="term" value="F:phosphate transmembrane transporter activity"/>
    <property type="evidence" value="ECO:0007669"/>
    <property type="project" value="InterPro"/>
</dbReference>
<dbReference type="GO" id="GO:0015293">
    <property type="term" value="F:symporter activity"/>
    <property type="evidence" value="ECO:0007669"/>
    <property type="project" value="UniProtKB-KW"/>
</dbReference>
<dbReference type="GO" id="GO:0035435">
    <property type="term" value="P:phosphate ion transmembrane transport"/>
    <property type="evidence" value="ECO:0007669"/>
    <property type="project" value="TreeGrafter"/>
</dbReference>
<dbReference type="InterPro" id="IPR001204">
    <property type="entry name" value="Phos_transporter"/>
</dbReference>
<dbReference type="PANTHER" id="PTHR11101:SF54">
    <property type="entry name" value="LOW-AFFINITY INORGANIC PHOSPHATE TRANSPORTER-RELATED"/>
    <property type="match status" value="1"/>
</dbReference>
<dbReference type="PANTHER" id="PTHR11101">
    <property type="entry name" value="PHOSPHATE TRANSPORTER"/>
    <property type="match status" value="1"/>
</dbReference>
<dbReference type="Pfam" id="PF01384">
    <property type="entry name" value="PHO4"/>
    <property type="match status" value="1"/>
</dbReference>
<organism>
    <name type="scientific">Mycobacterium bovis (strain ATCC BAA-935 / AF2122/97)</name>
    <dbReference type="NCBI Taxonomy" id="233413"/>
    <lineage>
        <taxon>Bacteria</taxon>
        <taxon>Bacillati</taxon>
        <taxon>Actinomycetota</taxon>
        <taxon>Actinomycetes</taxon>
        <taxon>Mycobacteriales</taxon>
        <taxon>Mycobacteriaceae</taxon>
        <taxon>Mycobacterium</taxon>
        <taxon>Mycobacterium tuberculosis complex</taxon>
    </lineage>
</organism>
<reference key="1">
    <citation type="journal article" date="2003" name="Proc. Natl. Acad. Sci. U.S.A.">
        <title>The complete genome sequence of Mycobacterium bovis.</title>
        <authorList>
            <person name="Garnier T."/>
            <person name="Eiglmeier K."/>
            <person name="Camus J.-C."/>
            <person name="Medina N."/>
            <person name="Mansoor H."/>
            <person name="Pryor M."/>
            <person name="Duthoy S."/>
            <person name="Grondin S."/>
            <person name="Lacroix C."/>
            <person name="Monsempe C."/>
            <person name="Simon S."/>
            <person name="Harris B."/>
            <person name="Atkin R."/>
            <person name="Doggett J."/>
            <person name="Mayes R."/>
            <person name="Keating L."/>
            <person name="Wheeler P.R."/>
            <person name="Parkhill J."/>
            <person name="Barrell B.G."/>
            <person name="Cole S.T."/>
            <person name="Gordon S.V."/>
            <person name="Hewinson R.G."/>
        </authorList>
    </citation>
    <scope>NUCLEOTIDE SEQUENCE [LARGE SCALE GENOMIC DNA]</scope>
    <source>
        <strain>ATCC BAA-935 / AF2122/97</strain>
    </source>
</reference>
<reference key="2">
    <citation type="journal article" date="2017" name="Genome Announc.">
        <title>Updated reference genome sequence and annotation of Mycobacterium bovis AF2122/97.</title>
        <authorList>
            <person name="Malone K.M."/>
            <person name="Farrell D."/>
            <person name="Stuber T.P."/>
            <person name="Schubert O.T."/>
            <person name="Aebersold R."/>
            <person name="Robbe-Austerman S."/>
            <person name="Gordon S.V."/>
        </authorList>
    </citation>
    <scope>NUCLEOTIDE SEQUENCE [LARGE SCALE GENOMIC DNA]</scope>
    <scope>GENOME REANNOTATION</scope>
    <source>
        <strain>ATCC BAA-935 / AF2122/97</strain>
    </source>
</reference>
<proteinExistence type="inferred from homology"/>